<dbReference type="EMBL" id="CP000514">
    <property type="protein sequence ID" value="ABM19112.1"/>
    <property type="molecule type" value="Genomic_DNA"/>
</dbReference>
<dbReference type="RefSeq" id="WP_011785505.1">
    <property type="nucleotide sequence ID" value="NC_008740.1"/>
</dbReference>
<dbReference type="SMR" id="A1U293"/>
<dbReference type="STRING" id="351348.Maqu_2031"/>
<dbReference type="GeneID" id="31820739"/>
<dbReference type="KEGG" id="maq:Maqu_2031"/>
<dbReference type="eggNOG" id="COG0234">
    <property type="taxonomic scope" value="Bacteria"/>
</dbReference>
<dbReference type="HOGENOM" id="CLU_132825_2_0_6"/>
<dbReference type="OrthoDB" id="9806791at2"/>
<dbReference type="Proteomes" id="UP000000998">
    <property type="component" value="Chromosome"/>
</dbReference>
<dbReference type="GO" id="GO:0005737">
    <property type="term" value="C:cytoplasm"/>
    <property type="evidence" value="ECO:0007669"/>
    <property type="project" value="UniProtKB-SubCell"/>
</dbReference>
<dbReference type="GO" id="GO:0005524">
    <property type="term" value="F:ATP binding"/>
    <property type="evidence" value="ECO:0007669"/>
    <property type="project" value="InterPro"/>
</dbReference>
<dbReference type="GO" id="GO:0046872">
    <property type="term" value="F:metal ion binding"/>
    <property type="evidence" value="ECO:0007669"/>
    <property type="project" value="TreeGrafter"/>
</dbReference>
<dbReference type="GO" id="GO:0044183">
    <property type="term" value="F:protein folding chaperone"/>
    <property type="evidence" value="ECO:0007669"/>
    <property type="project" value="InterPro"/>
</dbReference>
<dbReference type="GO" id="GO:0051087">
    <property type="term" value="F:protein-folding chaperone binding"/>
    <property type="evidence" value="ECO:0007669"/>
    <property type="project" value="TreeGrafter"/>
</dbReference>
<dbReference type="GO" id="GO:0051082">
    <property type="term" value="F:unfolded protein binding"/>
    <property type="evidence" value="ECO:0007669"/>
    <property type="project" value="TreeGrafter"/>
</dbReference>
<dbReference type="GO" id="GO:0051085">
    <property type="term" value="P:chaperone cofactor-dependent protein refolding"/>
    <property type="evidence" value="ECO:0007669"/>
    <property type="project" value="TreeGrafter"/>
</dbReference>
<dbReference type="CDD" id="cd00320">
    <property type="entry name" value="cpn10"/>
    <property type="match status" value="1"/>
</dbReference>
<dbReference type="FunFam" id="2.30.33.40:FF:000001">
    <property type="entry name" value="10 kDa chaperonin"/>
    <property type="match status" value="1"/>
</dbReference>
<dbReference type="Gene3D" id="2.30.33.40">
    <property type="entry name" value="GroES chaperonin"/>
    <property type="match status" value="1"/>
</dbReference>
<dbReference type="HAMAP" id="MF_00580">
    <property type="entry name" value="CH10"/>
    <property type="match status" value="1"/>
</dbReference>
<dbReference type="InterPro" id="IPR020818">
    <property type="entry name" value="Chaperonin_GroES"/>
</dbReference>
<dbReference type="InterPro" id="IPR037124">
    <property type="entry name" value="Chaperonin_GroES_sf"/>
</dbReference>
<dbReference type="InterPro" id="IPR018369">
    <property type="entry name" value="Chaprnonin_Cpn10_CS"/>
</dbReference>
<dbReference type="InterPro" id="IPR011032">
    <property type="entry name" value="GroES-like_sf"/>
</dbReference>
<dbReference type="NCBIfam" id="NF001527">
    <property type="entry name" value="PRK00364.1-2"/>
    <property type="match status" value="1"/>
</dbReference>
<dbReference type="NCBIfam" id="NF001531">
    <property type="entry name" value="PRK00364.2-2"/>
    <property type="match status" value="1"/>
</dbReference>
<dbReference type="NCBIfam" id="NF001533">
    <property type="entry name" value="PRK00364.2-4"/>
    <property type="match status" value="1"/>
</dbReference>
<dbReference type="NCBIfam" id="NF001534">
    <property type="entry name" value="PRK00364.2-5"/>
    <property type="match status" value="1"/>
</dbReference>
<dbReference type="PANTHER" id="PTHR10772">
    <property type="entry name" value="10 KDA HEAT SHOCK PROTEIN"/>
    <property type="match status" value="1"/>
</dbReference>
<dbReference type="PANTHER" id="PTHR10772:SF58">
    <property type="entry name" value="CO-CHAPERONIN GROES"/>
    <property type="match status" value="1"/>
</dbReference>
<dbReference type="Pfam" id="PF00166">
    <property type="entry name" value="Cpn10"/>
    <property type="match status" value="1"/>
</dbReference>
<dbReference type="PRINTS" id="PR00297">
    <property type="entry name" value="CHAPERONIN10"/>
</dbReference>
<dbReference type="SMART" id="SM00883">
    <property type="entry name" value="Cpn10"/>
    <property type="match status" value="1"/>
</dbReference>
<dbReference type="SUPFAM" id="SSF50129">
    <property type="entry name" value="GroES-like"/>
    <property type="match status" value="1"/>
</dbReference>
<dbReference type="PROSITE" id="PS00681">
    <property type="entry name" value="CHAPERONINS_CPN10"/>
    <property type="match status" value="1"/>
</dbReference>
<sequence length="95" mass="10289">MKIRPLHDRVVVRRKEEEEKTAGGIVLPGNAKEKPSQGEVIAVGNGRILDNGETRALAVKVGDTVVFGQYAGNTVKVDGEELLIMSENDIYGVLE</sequence>
<keyword id="KW-0143">Chaperone</keyword>
<keyword id="KW-0963">Cytoplasm</keyword>
<name>CH10_MARN8</name>
<feature type="chain" id="PRO_1000025297" description="Co-chaperonin GroES">
    <location>
        <begin position="1"/>
        <end position="95"/>
    </location>
</feature>
<comment type="function">
    <text evidence="1">Together with the chaperonin GroEL, plays an essential role in assisting protein folding. The GroEL-GroES system forms a nano-cage that allows encapsulation of the non-native substrate proteins and provides a physical environment optimized to promote and accelerate protein folding. GroES binds to the apical surface of the GroEL ring, thereby capping the opening of the GroEL channel.</text>
</comment>
<comment type="subunit">
    <text evidence="1">Heptamer of 7 subunits arranged in a ring. Interacts with the chaperonin GroEL.</text>
</comment>
<comment type="subcellular location">
    <subcellularLocation>
        <location evidence="1">Cytoplasm</location>
    </subcellularLocation>
</comment>
<comment type="similarity">
    <text evidence="1">Belongs to the GroES chaperonin family.</text>
</comment>
<organism>
    <name type="scientific">Marinobacter nauticus (strain ATCC 700491 / DSM 11845 / VT8)</name>
    <name type="common">Marinobacter aquaeolei</name>
    <dbReference type="NCBI Taxonomy" id="351348"/>
    <lineage>
        <taxon>Bacteria</taxon>
        <taxon>Pseudomonadati</taxon>
        <taxon>Pseudomonadota</taxon>
        <taxon>Gammaproteobacteria</taxon>
        <taxon>Pseudomonadales</taxon>
        <taxon>Marinobacteraceae</taxon>
        <taxon>Marinobacter</taxon>
    </lineage>
</organism>
<protein>
    <recommendedName>
        <fullName evidence="1">Co-chaperonin GroES</fullName>
    </recommendedName>
    <alternativeName>
        <fullName evidence="1">10 kDa chaperonin</fullName>
    </alternativeName>
    <alternativeName>
        <fullName evidence="1">Chaperonin-10</fullName>
        <shortName evidence="1">Cpn10</shortName>
    </alternativeName>
</protein>
<proteinExistence type="inferred from homology"/>
<evidence type="ECO:0000255" key="1">
    <source>
        <dbReference type="HAMAP-Rule" id="MF_00580"/>
    </source>
</evidence>
<reference key="1">
    <citation type="journal article" date="2011" name="Appl. Environ. Microbiol.">
        <title>Genomic potential of Marinobacter aquaeolei, a biogeochemical 'opportunitroph'.</title>
        <authorList>
            <person name="Singer E."/>
            <person name="Webb E.A."/>
            <person name="Nelson W.C."/>
            <person name="Heidelberg J.F."/>
            <person name="Ivanova N."/>
            <person name="Pati A."/>
            <person name="Edwards K.J."/>
        </authorList>
    </citation>
    <scope>NUCLEOTIDE SEQUENCE [LARGE SCALE GENOMIC DNA]</scope>
    <source>
        <strain>ATCC 700491 / DSM 11845 / VT8</strain>
    </source>
</reference>
<accession>A1U293</accession>
<gene>
    <name evidence="1" type="primary">groES</name>
    <name evidence="1" type="synonym">groS</name>
    <name type="ordered locus">Maqu_2031</name>
</gene>